<evidence type="ECO:0000255" key="1"/>
<evidence type="ECO:0000305" key="2"/>
<dbReference type="EMBL" id="BX571857">
    <property type="protein sequence ID" value="CAG43468.1"/>
    <property type="molecule type" value="Genomic_DNA"/>
</dbReference>
<dbReference type="RefSeq" id="WP_000383814.1">
    <property type="nucleotide sequence ID" value="NC_002953.3"/>
</dbReference>
<dbReference type="SMR" id="Q6G8I8"/>
<dbReference type="KEGG" id="sas:SAS1665"/>
<dbReference type="HOGENOM" id="CLU_115870_0_0_9"/>
<dbReference type="GO" id="GO:0005886">
    <property type="term" value="C:plasma membrane"/>
    <property type="evidence" value="ECO:0007669"/>
    <property type="project" value="UniProtKB-SubCell"/>
</dbReference>
<dbReference type="Gene3D" id="1.10.287.950">
    <property type="entry name" value="Methyl-accepting chemotaxis protein"/>
    <property type="match status" value="1"/>
</dbReference>
<dbReference type="InterPro" id="IPR009293">
    <property type="entry name" value="UPF0478"/>
</dbReference>
<dbReference type="PANTHER" id="PTHR40070">
    <property type="entry name" value="UPF0478 PROTEIN YTXG"/>
    <property type="match status" value="1"/>
</dbReference>
<dbReference type="PANTHER" id="PTHR40070:SF1">
    <property type="entry name" value="UPF0478 PROTEIN YTXG"/>
    <property type="match status" value="1"/>
</dbReference>
<dbReference type="Pfam" id="PF06103">
    <property type="entry name" value="DUF948"/>
    <property type="match status" value="1"/>
</dbReference>
<dbReference type="SUPFAM" id="SSF58104">
    <property type="entry name" value="Methyl-accepting chemotaxis protein (MCP) signaling domain"/>
    <property type="match status" value="1"/>
</dbReference>
<keyword id="KW-1003">Cell membrane</keyword>
<keyword id="KW-0472">Membrane</keyword>
<keyword id="KW-0812">Transmembrane</keyword>
<keyword id="KW-1133">Transmembrane helix</keyword>
<accession>Q6G8I8</accession>
<comment type="subcellular location">
    <subcellularLocation>
        <location evidence="2">Cell membrane</location>
        <topology evidence="2">Single-pass membrane protein</topology>
    </subcellularLocation>
</comment>
<comment type="similarity">
    <text evidence="2">Belongs to the UPF0478 family.</text>
</comment>
<protein>
    <recommendedName>
        <fullName>UPF0478 protein SAS1665</fullName>
    </recommendedName>
</protein>
<sequence length="163" mass="18002">MDWILPIAGIIAAIAFLILCIGIVAVLNSVKKNLDYVAKTLDGVEGQVQGITRETTDLLHKVNRLTEDIQGKVDRLNSVVDAVKGIGDSVQTLNSSVDRVTNSITHNISQNEDKISQVVQWSNVAMEIADKWQNRHYRRGSANYKANNVATDANHSYTSRVDK</sequence>
<name>Y1665_STAAS</name>
<gene>
    <name type="ordered locus">SAS1665</name>
</gene>
<organism>
    <name type="scientific">Staphylococcus aureus (strain MSSA476)</name>
    <dbReference type="NCBI Taxonomy" id="282459"/>
    <lineage>
        <taxon>Bacteria</taxon>
        <taxon>Bacillati</taxon>
        <taxon>Bacillota</taxon>
        <taxon>Bacilli</taxon>
        <taxon>Bacillales</taxon>
        <taxon>Staphylococcaceae</taxon>
        <taxon>Staphylococcus</taxon>
    </lineage>
</organism>
<proteinExistence type="inferred from homology"/>
<feature type="chain" id="PRO_0000299439" description="UPF0478 protein SAS1665">
    <location>
        <begin position="1"/>
        <end position="163"/>
    </location>
</feature>
<feature type="transmembrane region" description="Helical" evidence="1">
    <location>
        <begin position="7"/>
        <end position="27"/>
    </location>
</feature>
<reference key="1">
    <citation type="journal article" date="2004" name="Proc. Natl. Acad. Sci. U.S.A.">
        <title>Complete genomes of two clinical Staphylococcus aureus strains: evidence for the rapid evolution of virulence and drug resistance.</title>
        <authorList>
            <person name="Holden M.T.G."/>
            <person name="Feil E.J."/>
            <person name="Lindsay J.A."/>
            <person name="Peacock S.J."/>
            <person name="Day N.P.J."/>
            <person name="Enright M.C."/>
            <person name="Foster T.J."/>
            <person name="Moore C.E."/>
            <person name="Hurst L."/>
            <person name="Atkin R."/>
            <person name="Barron A."/>
            <person name="Bason N."/>
            <person name="Bentley S.D."/>
            <person name="Chillingworth C."/>
            <person name="Chillingworth T."/>
            <person name="Churcher C."/>
            <person name="Clark L."/>
            <person name="Corton C."/>
            <person name="Cronin A."/>
            <person name="Doggett J."/>
            <person name="Dowd L."/>
            <person name="Feltwell T."/>
            <person name="Hance Z."/>
            <person name="Harris B."/>
            <person name="Hauser H."/>
            <person name="Holroyd S."/>
            <person name="Jagels K."/>
            <person name="James K.D."/>
            <person name="Lennard N."/>
            <person name="Line A."/>
            <person name="Mayes R."/>
            <person name="Moule S."/>
            <person name="Mungall K."/>
            <person name="Ormond D."/>
            <person name="Quail M.A."/>
            <person name="Rabbinowitsch E."/>
            <person name="Rutherford K.M."/>
            <person name="Sanders M."/>
            <person name="Sharp S."/>
            <person name="Simmonds M."/>
            <person name="Stevens K."/>
            <person name="Whitehead S."/>
            <person name="Barrell B.G."/>
            <person name="Spratt B.G."/>
            <person name="Parkhill J."/>
        </authorList>
    </citation>
    <scope>NUCLEOTIDE SEQUENCE [LARGE SCALE GENOMIC DNA]</scope>
    <source>
        <strain>MSSA476</strain>
    </source>
</reference>